<keyword id="KW-0997">Cell inner membrane</keyword>
<keyword id="KW-1003">Cell membrane</keyword>
<keyword id="KW-0472">Membrane</keyword>
<keyword id="KW-0812">Transmembrane</keyword>
<keyword id="KW-1133">Transmembrane helix</keyword>
<keyword id="KW-0813">Transport</keyword>
<organism>
    <name type="scientific">Salmonella newport (strain SL254)</name>
    <dbReference type="NCBI Taxonomy" id="423368"/>
    <lineage>
        <taxon>Bacteria</taxon>
        <taxon>Pseudomonadati</taxon>
        <taxon>Pseudomonadota</taxon>
        <taxon>Gammaproteobacteria</taxon>
        <taxon>Enterobacterales</taxon>
        <taxon>Enterobacteriaceae</taxon>
        <taxon>Salmonella</taxon>
    </lineage>
</organism>
<reference key="1">
    <citation type="journal article" date="2011" name="J. Bacteriol.">
        <title>Comparative genomics of 28 Salmonella enterica isolates: evidence for CRISPR-mediated adaptive sublineage evolution.</title>
        <authorList>
            <person name="Fricke W.F."/>
            <person name="Mammel M.K."/>
            <person name="McDermott P.F."/>
            <person name="Tartera C."/>
            <person name="White D.G."/>
            <person name="Leclerc J.E."/>
            <person name="Ravel J."/>
            <person name="Cebula T.A."/>
        </authorList>
    </citation>
    <scope>NUCLEOTIDE SEQUENCE [LARGE SCALE GENOMIC DNA]</scope>
    <source>
        <strain>SL254</strain>
    </source>
</reference>
<proteinExistence type="inferred from homology"/>
<protein>
    <recommendedName>
        <fullName evidence="1">Vitamin B12 import system permease protein BtuC</fullName>
    </recommendedName>
</protein>
<accession>B4T4N5</accession>
<dbReference type="EMBL" id="CP001113">
    <property type="protein sequence ID" value="ACF63155.1"/>
    <property type="molecule type" value="Genomic_DNA"/>
</dbReference>
<dbReference type="RefSeq" id="WP_000954982.1">
    <property type="nucleotide sequence ID" value="NZ_CCMR01000003.1"/>
</dbReference>
<dbReference type="SMR" id="B4T4N5"/>
<dbReference type="KEGG" id="see:SNSL254_A1451"/>
<dbReference type="HOGENOM" id="CLU_013016_0_3_6"/>
<dbReference type="Proteomes" id="UP000008824">
    <property type="component" value="Chromosome"/>
</dbReference>
<dbReference type="GO" id="GO:0005886">
    <property type="term" value="C:plasma membrane"/>
    <property type="evidence" value="ECO:0007669"/>
    <property type="project" value="UniProtKB-SubCell"/>
</dbReference>
<dbReference type="GO" id="GO:0090482">
    <property type="term" value="F:vitamin transmembrane transporter activity"/>
    <property type="evidence" value="ECO:0007669"/>
    <property type="project" value="UniProtKB-UniRule"/>
</dbReference>
<dbReference type="GO" id="GO:0015889">
    <property type="term" value="P:cobalamin transport"/>
    <property type="evidence" value="ECO:0007669"/>
    <property type="project" value="UniProtKB-UniRule"/>
</dbReference>
<dbReference type="CDD" id="cd06550">
    <property type="entry name" value="TM_ABC_iron-siderophores_like"/>
    <property type="match status" value="1"/>
</dbReference>
<dbReference type="FunFam" id="1.10.3470.10:FF:000001">
    <property type="entry name" value="Vitamin B12 ABC transporter permease BtuC"/>
    <property type="match status" value="1"/>
</dbReference>
<dbReference type="Gene3D" id="1.10.3470.10">
    <property type="entry name" value="ABC transporter involved in vitamin B12 uptake, BtuC"/>
    <property type="match status" value="1"/>
</dbReference>
<dbReference type="HAMAP" id="MF_01004">
    <property type="entry name" value="BtuC"/>
    <property type="match status" value="1"/>
</dbReference>
<dbReference type="InterPro" id="IPR037294">
    <property type="entry name" value="ABC_BtuC-like"/>
</dbReference>
<dbReference type="InterPro" id="IPR023691">
    <property type="entry name" value="ABC_transptr_BtuC"/>
</dbReference>
<dbReference type="InterPro" id="IPR000522">
    <property type="entry name" value="ABC_transptr_permease_BtuC"/>
</dbReference>
<dbReference type="NCBIfam" id="NF003001">
    <property type="entry name" value="PRK03784.1"/>
    <property type="match status" value="1"/>
</dbReference>
<dbReference type="PANTHER" id="PTHR30472">
    <property type="entry name" value="FERRIC ENTEROBACTIN TRANSPORT SYSTEM PERMEASE PROTEIN"/>
    <property type="match status" value="1"/>
</dbReference>
<dbReference type="PANTHER" id="PTHR30472:SF29">
    <property type="entry name" value="VITAMIN B12 IMPORT SYSTEM PERMEASE PROTEIN BTUC"/>
    <property type="match status" value="1"/>
</dbReference>
<dbReference type="Pfam" id="PF01032">
    <property type="entry name" value="FecCD"/>
    <property type="match status" value="1"/>
</dbReference>
<dbReference type="SUPFAM" id="SSF81345">
    <property type="entry name" value="ABC transporter involved in vitamin B12 uptake, BtuC"/>
    <property type="match status" value="1"/>
</dbReference>
<name>BTUC_SALNS</name>
<gene>
    <name evidence="1" type="primary">btuC</name>
    <name type="ordered locus">SNSL254_A1451</name>
</gene>
<evidence type="ECO:0000255" key="1">
    <source>
        <dbReference type="HAMAP-Rule" id="MF_01004"/>
    </source>
</evidence>
<sequence>MLTFARQQQRRNVRWLLSLSLLVLLATLLSLCAGEQWIAPGDWLSARGELFVWQIRLPRTLAVLLVGAALALSGAVMQALFENPLAEPGLLGVSNGAGVGLIAAVLLGQGQLPGWALGLCAIAGALIITLILLRFARRHLSTSRLLLAGVALGIICSALMTWAIYFSTSFDLRQLMYWMMGGFGGVDWQQSWLMIALIPVLIWICCQSQPLNMLALGETSARQLGLPLWFWRNLLVIATGWMVGVSVAMAGAIGFIGLVIPHILRLCGLTDHRVLLPGCALAGAIALLLADVVARLALASAELPIGVVTATLGAPVFIWLLLKSAR</sequence>
<comment type="function">
    <text evidence="1">Part of the ABC transporter complex BtuCDF involved in vitamin B12 import. Involved in the translocation of the substrate across the membrane.</text>
</comment>
<comment type="subunit">
    <text evidence="1">The complex is composed of two ATP-binding proteins (BtuD), two transmembrane proteins (BtuC) and a solute-binding protein (BtuF).</text>
</comment>
<comment type="subcellular location">
    <subcellularLocation>
        <location evidence="1">Cell inner membrane</location>
        <topology evidence="1">Multi-pass membrane protein</topology>
    </subcellularLocation>
</comment>
<comment type="similarity">
    <text evidence="1">Belongs to the binding-protein-dependent transport system permease family. FecCD subfamily.</text>
</comment>
<feature type="chain" id="PRO_1000201556" description="Vitamin B12 import system permease protein BtuC">
    <location>
        <begin position="1"/>
        <end position="326"/>
    </location>
</feature>
<feature type="transmembrane region" description="Helical" evidence="1">
    <location>
        <begin position="15"/>
        <end position="35"/>
    </location>
</feature>
<feature type="transmembrane region" description="Helical" evidence="1">
    <location>
        <begin position="61"/>
        <end position="81"/>
    </location>
</feature>
<feature type="transmembrane region" description="Helical" evidence="1">
    <location>
        <begin position="88"/>
        <end position="108"/>
    </location>
</feature>
<feature type="transmembrane region" description="Helical" evidence="1">
    <location>
        <begin position="112"/>
        <end position="132"/>
    </location>
</feature>
<feature type="transmembrane region" description="Helical" evidence="1">
    <location>
        <begin position="146"/>
        <end position="166"/>
    </location>
</feature>
<feature type="transmembrane region" description="Helical" evidence="1">
    <location>
        <begin position="184"/>
        <end position="204"/>
    </location>
</feature>
<feature type="transmembrane region" description="Helical" evidence="1">
    <location>
        <begin position="240"/>
        <end position="260"/>
    </location>
</feature>
<feature type="transmembrane region" description="Helical" evidence="1">
    <location>
        <begin position="274"/>
        <end position="294"/>
    </location>
</feature>
<feature type="transmembrane region" description="Helical" evidence="1">
    <location>
        <begin position="302"/>
        <end position="322"/>
    </location>
</feature>